<evidence type="ECO:0000250" key="1"/>
<evidence type="ECO:0000255" key="2">
    <source>
        <dbReference type="HAMAP-Rule" id="MF_01898"/>
    </source>
</evidence>
<evidence type="ECO:0000305" key="3"/>
<sequence length="644" mass="72540">MVTALSDVNNTDNYGAGQIQVLEGLEAVRKRPGMYIGSTSERGLHHLVWEIVDNSIDEALAGYANQIEVVIEKDNWIKVTDNGRGIPVDIQEKMGRPAVEVILTVLHAGGKFGGGGYKVSGGLHGVGSSVVNALSQDLEVYVHRNETIYHQAYKKGVPQFDLKEVGTTDKTGTVIRFKADGEIFTETTVYNYETLQQRIRELAFLNKGIQITLRDERDEENVREDSYHYEGGIKSYVELLNENKEPIHDEPIYIHQSKDDIEVEIAIQYNSGYATNLLTYANNIHTYEGGTHEDGFKRALTRVLNSYGLSSKIMKEEKDRLSGEDTREGMTAIISIKHGDPQFEGQTKTKLGNSEVRQVVDKLFSEHFERFLYENPQVARTVVEKGIMAARARVAAKKAREVTRRKSALDVASLPGKLADCSSKSPEECEIFLVEGDSAGGSTKSGRDSRTQAILPLRGKILNVEKARLDRILNNNEIRQMITAFGTGIGGDFDLAKARYHKIVIMTDADVDGAHIRTLLLTFFYRFMRPLIEAGYVYIAQPPLYKLTQGKQKYYVYNDRELDKLKSELNPTPKWSIARYKGLGEMNADQLWETTMNPEHRALLQVKLEDAIEADQTFEMLMGDVVENRRQFIEDNAVYANLDF</sequence>
<feature type="initiator methionine" description="Removed" evidence="1">
    <location>
        <position position="1"/>
    </location>
</feature>
<feature type="chain" id="PRO_0000145341" description="DNA gyrase subunit B">
    <location>
        <begin position="2"/>
        <end position="644"/>
    </location>
</feature>
<feature type="domain" description="Toprim" evidence="2">
    <location>
        <begin position="429"/>
        <end position="543"/>
    </location>
</feature>
<feature type="binding site" evidence="2">
    <location>
        <position position="435"/>
    </location>
    <ligand>
        <name>Mg(2+)</name>
        <dbReference type="ChEBI" id="CHEBI:18420"/>
        <label>1</label>
        <note>catalytic</note>
    </ligand>
</feature>
<feature type="binding site" evidence="2">
    <location>
        <position position="508"/>
    </location>
    <ligand>
        <name>Mg(2+)</name>
        <dbReference type="ChEBI" id="CHEBI:18420"/>
        <label>1</label>
        <note>catalytic</note>
    </ligand>
</feature>
<feature type="binding site" evidence="2">
    <location>
        <position position="508"/>
    </location>
    <ligand>
        <name>Mg(2+)</name>
        <dbReference type="ChEBI" id="CHEBI:18420"/>
        <label>2</label>
    </ligand>
</feature>
<feature type="binding site" evidence="2">
    <location>
        <position position="510"/>
    </location>
    <ligand>
        <name>Mg(2+)</name>
        <dbReference type="ChEBI" id="CHEBI:18420"/>
        <label>2</label>
    </ligand>
</feature>
<feature type="site" description="Interaction with DNA" evidence="2">
    <location>
        <position position="460"/>
    </location>
</feature>
<feature type="site" description="Interaction with DNA" evidence="2">
    <location>
        <position position="463"/>
    </location>
</feature>
<dbReference type="EC" id="5.6.2.2" evidence="2"/>
<dbReference type="EMBL" id="BX571857">
    <property type="protein sequence ID" value="CAG41777.1"/>
    <property type="status" value="ALT_INIT"/>
    <property type="molecule type" value="Genomic_DNA"/>
</dbReference>
<dbReference type="RefSeq" id="WP_000255586.1">
    <property type="nucleotide sequence ID" value="NC_002953.3"/>
</dbReference>
<dbReference type="SMR" id="Q6GD85"/>
<dbReference type="KEGG" id="sas:SAS0005"/>
<dbReference type="HOGENOM" id="CLU_006146_1_2_9"/>
<dbReference type="GO" id="GO:0005694">
    <property type="term" value="C:chromosome"/>
    <property type="evidence" value="ECO:0007669"/>
    <property type="project" value="InterPro"/>
</dbReference>
<dbReference type="GO" id="GO:0005737">
    <property type="term" value="C:cytoplasm"/>
    <property type="evidence" value="ECO:0007669"/>
    <property type="project" value="UniProtKB-SubCell"/>
</dbReference>
<dbReference type="GO" id="GO:0005524">
    <property type="term" value="F:ATP binding"/>
    <property type="evidence" value="ECO:0007669"/>
    <property type="project" value="UniProtKB-UniRule"/>
</dbReference>
<dbReference type="GO" id="GO:0003677">
    <property type="term" value="F:DNA binding"/>
    <property type="evidence" value="ECO:0007669"/>
    <property type="project" value="UniProtKB-KW"/>
</dbReference>
<dbReference type="GO" id="GO:0034335">
    <property type="term" value="F:DNA negative supercoiling activity"/>
    <property type="evidence" value="ECO:0007669"/>
    <property type="project" value="UniProtKB-ARBA"/>
</dbReference>
<dbReference type="GO" id="GO:0046872">
    <property type="term" value="F:metal ion binding"/>
    <property type="evidence" value="ECO:0007669"/>
    <property type="project" value="UniProtKB-KW"/>
</dbReference>
<dbReference type="GO" id="GO:0006265">
    <property type="term" value="P:DNA topological change"/>
    <property type="evidence" value="ECO:0007669"/>
    <property type="project" value="UniProtKB-UniRule"/>
</dbReference>
<dbReference type="GO" id="GO:0006261">
    <property type="term" value="P:DNA-templated DNA replication"/>
    <property type="evidence" value="ECO:0007669"/>
    <property type="project" value="UniProtKB-UniRule"/>
</dbReference>
<dbReference type="CDD" id="cd16928">
    <property type="entry name" value="HATPase_GyrB-like"/>
    <property type="match status" value="1"/>
</dbReference>
<dbReference type="CDD" id="cd00822">
    <property type="entry name" value="TopoII_Trans_DNA_gyrase"/>
    <property type="match status" value="1"/>
</dbReference>
<dbReference type="CDD" id="cd03366">
    <property type="entry name" value="TOPRIM_TopoIIA_GyrB"/>
    <property type="match status" value="1"/>
</dbReference>
<dbReference type="FunFam" id="3.30.230.10:FF:000005">
    <property type="entry name" value="DNA gyrase subunit B"/>
    <property type="match status" value="1"/>
</dbReference>
<dbReference type="FunFam" id="3.30.565.10:FF:000002">
    <property type="entry name" value="DNA gyrase subunit B"/>
    <property type="match status" value="1"/>
</dbReference>
<dbReference type="FunFam" id="3.40.50.670:FF:000002">
    <property type="entry name" value="DNA gyrase subunit B"/>
    <property type="match status" value="1"/>
</dbReference>
<dbReference type="Gene3D" id="3.30.230.10">
    <property type="match status" value="1"/>
</dbReference>
<dbReference type="Gene3D" id="3.40.50.670">
    <property type="match status" value="1"/>
</dbReference>
<dbReference type="Gene3D" id="3.30.565.10">
    <property type="entry name" value="Histidine kinase-like ATPase, C-terminal domain"/>
    <property type="match status" value="1"/>
</dbReference>
<dbReference type="HAMAP" id="MF_01898">
    <property type="entry name" value="GyrB"/>
    <property type="match status" value="1"/>
</dbReference>
<dbReference type="InterPro" id="IPR002288">
    <property type="entry name" value="DNA_gyrase_B_C"/>
</dbReference>
<dbReference type="InterPro" id="IPR011557">
    <property type="entry name" value="GyrB"/>
</dbReference>
<dbReference type="InterPro" id="IPR036890">
    <property type="entry name" value="HATPase_C_sf"/>
</dbReference>
<dbReference type="InterPro" id="IPR020568">
    <property type="entry name" value="Ribosomal_Su5_D2-typ_SF"/>
</dbReference>
<dbReference type="InterPro" id="IPR014721">
    <property type="entry name" value="Ribsml_uS5_D2-typ_fold_subgr"/>
</dbReference>
<dbReference type="InterPro" id="IPR001241">
    <property type="entry name" value="Topo_IIA"/>
</dbReference>
<dbReference type="InterPro" id="IPR013760">
    <property type="entry name" value="Topo_IIA-like_dom_sf"/>
</dbReference>
<dbReference type="InterPro" id="IPR000565">
    <property type="entry name" value="Topo_IIA_B"/>
</dbReference>
<dbReference type="InterPro" id="IPR013759">
    <property type="entry name" value="Topo_IIA_B_C"/>
</dbReference>
<dbReference type="InterPro" id="IPR013506">
    <property type="entry name" value="Topo_IIA_bsu_dom2"/>
</dbReference>
<dbReference type="InterPro" id="IPR018522">
    <property type="entry name" value="TopoIIA_CS"/>
</dbReference>
<dbReference type="InterPro" id="IPR006171">
    <property type="entry name" value="TOPRIM_dom"/>
</dbReference>
<dbReference type="InterPro" id="IPR034160">
    <property type="entry name" value="TOPRIM_GyrB"/>
</dbReference>
<dbReference type="NCBIfam" id="TIGR01059">
    <property type="entry name" value="gyrB"/>
    <property type="match status" value="1"/>
</dbReference>
<dbReference type="NCBIfam" id="NF004189">
    <property type="entry name" value="PRK05644.1"/>
    <property type="match status" value="1"/>
</dbReference>
<dbReference type="NCBIfam" id="NF011501">
    <property type="entry name" value="PRK14939.1"/>
    <property type="match status" value="1"/>
</dbReference>
<dbReference type="PANTHER" id="PTHR45866:SF1">
    <property type="entry name" value="DNA GYRASE SUBUNIT B, MITOCHONDRIAL"/>
    <property type="match status" value="1"/>
</dbReference>
<dbReference type="PANTHER" id="PTHR45866">
    <property type="entry name" value="DNA GYRASE/TOPOISOMERASE SUBUNIT B"/>
    <property type="match status" value="1"/>
</dbReference>
<dbReference type="Pfam" id="PF00204">
    <property type="entry name" value="DNA_gyraseB"/>
    <property type="match status" value="1"/>
</dbReference>
<dbReference type="Pfam" id="PF00986">
    <property type="entry name" value="DNA_gyraseB_C"/>
    <property type="match status" value="1"/>
</dbReference>
<dbReference type="Pfam" id="PF02518">
    <property type="entry name" value="HATPase_c"/>
    <property type="match status" value="1"/>
</dbReference>
<dbReference type="Pfam" id="PF01751">
    <property type="entry name" value="Toprim"/>
    <property type="match status" value="1"/>
</dbReference>
<dbReference type="PRINTS" id="PR01159">
    <property type="entry name" value="DNAGYRASEB"/>
</dbReference>
<dbReference type="PRINTS" id="PR00418">
    <property type="entry name" value="TPI2FAMILY"/>
</dbReference>
<dbReference type="SMART" id="SM00387">
    <property type="entry name" value="HATPase_c"/>
    <property type="match status" value="1"/>
</dbReference>
<dbReference type="SMART" id="SM00433">
    <property type="entry name" value="TOP2c"/>
    <property type="match status" value="1"/>
</dbReference>
<dbReference type="SUPFAM" id="SSF55874">
    <property type="entry name" value="ATPase domain of HSP90 chaperone/DNA topoisomerase II/histidine kinase"/>
    <property type="match status" value="1"/>
</dbReference>
<dbReference type="SUPFAM" id="SSF54211">
    <property type="entry name" value="Ribosomal protein S5 domain 2-like"/>
    <property type="match status" value="1"/>
</dbReference>
<dbReference type="SUPFAM" id="SSF56719">
    <property type="entry name" value="Type II DNA topoisomerase"/>
    <property type="match status" value="1"/>
</dbReference>
<dbReference type="PROSITE" id="PS00177">
    <property type="entry name" value="TOPOISOMERASE_II"/>
    <property type="match status" value="1"/>
</dbReference>
<dbReference type="PROSITE" id="PS50880">
    <property type="entry name" value="TOPRIM"/>
    <property type="match status" value="1"/>
</dbReference>
<protein>
    <recommendedName>
        <fullName evidence="2">DNA gyrase subunit B</fullName>
        <ecNumber evidence="2">5.6.2.2</ecNumber>
    </recommendedName>
</protein>
<proteinExistence type="inferred from homology"/>
<organism>
    <name type="scientific">Staphylococcus aureus (strain MSSA476)</name>
    <dbReference type="NCBI Taxonomy" id="282459"/>
    <lineage>
        <taxon>Bacteria</taxon>
        <taxon>Bacillati</taxon>
        <taxon>Bacillota</taxon>
        <taxon>Bacilli</taxon>
        <taxon>Bacillales</taxon>
        <taxon>Staphylococcaceae</taxon>
        <taxon>Staphylococcus</taxon>
    </lineage>
</organism>
<keyword id="KW-0067">ATP-binding</keyword>
<keyword id="KW-0963">Cytoplasm</keyword>
<keyword id="KW-0238">DNA-binding</keyword>
<keyword id="KW-0413">Isomerase</keyword>
<keyword id="KW-0460">Magnesium</keyword>
<keyword id="KW-0479">Metal-binding</keyword>
<keyword id="KW-0547">Nucleotide-binding</keyword>
<keyword id="KW-0799">Topoisomerase</keyword>
<gene>
    <name evidence="2" type="primary">gyrB</name>
    <name type="ordered locus">SAS0005</name>
</gene>
<accession>Q6GD85</accession>
<reference key="1">
    <citation type="journal article" date="2004" name="Proc. Natl. Acad. Sci. U.S.A.">
        <title>Complete genomes of two clinical Staphylococcus aureus strains: evidence for the rapid evolution of virulence and drug resistance.</title>
        <authorList>
            <person name="Holden M.T.G."/>
            <person name="Feil E.J."/>
            <person name="Lindsay J.A."/>
            <person name="Peacock S.J."/>
            <person name="Day N.P.J."/>
            <person name="Enright M.C."/>
            <person name="Foster T.J."/>
            <person name="Moore C.E."/>
            <person name="Hurst L."/>
            <person name="Atkin R."/>
            <person name="Barron A."/>
            <person name="Bason N."/>
            <person name="Bentley S.D."/>
            <person name="Chillingworth C."/>
            <person name="Chillingworth T."/>
            <person name="Churcher C."/>
            <person name="Clark L."/>
            <person name="Corton C."/>
            <person name="Cronin A."/>
            <person name="Doggett J."/>
            <person name="Dowd L."/>
            <person name="Feltwell T."/>
            <person name="Hance Z."/>
            <person name="Harris B."/>
            <person name="Hauser H."/>
            <person name="Holroyd S."/>
            <person name="Jagels K."/>
            <person name="James K.D."/>
            <person name="Lennard N."/>
            <person name="Line A."/>
            <person name="Mayes R."/>
            <person name="Moule S."/>
            <person name="Mungall K."/>
            <person name="Ormond D."/>
            <person name="Quail M.A."/>
            <person name="Rabbinowitsch E."/>
            <person name="Rutherford K.M."/>
            <person name="Sanders M."/>
            <person name="Sharp S."/>
            <person name="Simmonds M."/>
            <person name="Stevens K."/>
            <person name="Whitehead S."/>
            <person name="Barrell B.G."/>
            <person name="Spratt B.G."/>
            <person name="Parkhill J."/>
        </authorList>
    </citation>
    <scope>NUCLEOTIDE SEQUENCE [LARGE SCALE GENOMIC DNA]</scope>
    <source>
        <strain>MSSA476</strain>
    </source>
</reference>
<name>GYRB_STAAS</name>
<comment type="function">
    <text evidence="2">A type II topoisomerase that negatively supercoils closed circular double-stranded (ds) DNA in an ATP-dependent manner to modulate DNA topology and maintain chromosomes in an underwound state. Negative supercoiling favors strand separation, and DNA replication, transcription, recombination and repair, all of which involve strand separation. Also able to catalyze the interconversion of other topological isomers of dsDNA rings, including catenanes and knotted rings. Type II topoisomerases break and join 2 DNA strands simultaneously in an ATP-dependent manner.</text>
</comment>
<comment type="catalytic activity">
    <reaction evidence="2">
        <text>ATP-dependent breakage, passage and rejoining of double-stranded DNA.</text>
        <dbReference type="EC" id="5.6.2.2"/>
    </reaction>
</comment>
<comment type="cofactor">
    <cofactor evidence="2">
        <name>Mg(2+)</name>
        <dbReference type="ChEBI" id="CHEBI:18420"/>
    </cofactor>
    <cofactor evidence="2">
        <name>Mn(2+)</name>
        <dbReference type="ChEBI" id="CHEBI:29035"/>
    </cofactor>
    <cofactor evidence="2">
        <name>Ca(2+)</name>
        <dbReference type="ChEBI" id="CHEBI:29108"/>
    </cofactor>
    <text evidence="2">Binds two Mg(2+) per subunit. The magnesium ions form salt bridges with both the protein and the DNA. Can also accept other divalent metal cations, such as Mn(2+) or Ca(2+).</text>
</comment>
<comment type="subunit">
    <text evidence="2">Heterotetramer, composed of two GyrA and two GyrB chains. In the heterotetramer, GyrA contains the active site tyrosine that forms a transient covalent intermediate with DNA, while GyrB binds cofactors and catalyzes ATP hydrolysis.</text>
</comment>
<comment type="subcellular location">
    <subcellularLocation>
        <location evidence="2">Cytoplasm</location>
    </subcellularLocation>
</comment>
<comment type="miscellaneous">
    <text evidence="2">Few gyrases are as efficient as E.coli at forming negative supercoils. Not all organisms have 2 type II topoisomerases; in organisms with a single type II topoisomerase this enzyme also has to decatenate newly replicated chromosomes.</text>
</comment>
<comment type="similarity">
    <text evidence="2">Belongs to the type II topoisomerase GyrB family.</text>
</comment>
<comment type="sequence caution" evidence="3">
    <conflict type="erroneous initiation">
        <sequence resource="EMBL-CDS" id="CAG41777"/>
    </conflict>
    <text>Truncated N-terminus.</text>
</comment>